<feature type="chain" id="PRO_0000299001" description="GDP-fucose protein O-fucosyltransferase 3">
    <location>
        <begin position="1"/>
        <end position="478"/>
    </location>
</feature>
<feature type="topological domain" description="Cytoplasmic" evidence="4">
    <location>
        <begin position="1"/>
        <end position="8"/>
    </location>
</feature>
<feature type="transmembrane region" description="Helical; Signal-anchor for type II membrane protein" evidence="4">
    <location>
        <begin position="9"/>
        <end position="31"/>
    </location>
</feature>
<feature type="topological domain" description="Lumenal" evidence="4">
    <location>
        <begin position="32"/>
        <end position="478"/>
    </location>
</feature>
<feature type="glycosylation site" description="N-linked (GlcNAc...) asparagine" evidence="4">
    <location>
        <position position="110"/>
    </location>
</feature>
<feature type="glycosylation site" description="N-linked (GlcNAc...) asparagine" evidence="4">
    <location>
        <position position="168"/>
    </location>
</feature>
<feature type="disulfide bond" evidence="1">
    <location>
        <begin position="389"/>
        <end position="392"/>
    </location>
</feature>
<accession>Q5F2N4</accession>
<proteinExistence type="evidence at transcript level"/>
<organism>
    <name type="scientific">Canis lupus familiaris</name>
    <name type="common">Dog</name>
    <name type="synonym">Canis familiaris</name>
    <dbReference type="NCBI Taxonomy" id="9615"/>
    <lineage>
        <taxon>Eukaryota</taxon>
        <taxon>Metazoa</taxon>
        <taxon>Chordata</taxon>
        <taxon>Craniata</taxon>
        <taxon>Vertebrata</taxon>
        <taxon>Euteleostomi</taxon>
        <taxon>Mammalia</taxon>
        <taxon>Eutheria</taxon>
        <taxon>Laurasiatheria</taxon>
        <taxon>Carnivora</taxon>
        <taxon>Caniformia</taxon>
        <taxon>Canidae</taxon>
        <taxon>Canis</taxon>
    </lineage>
</organism>
<keyword id="KW-1015">Disulfide bond</keyword>
<keyword id="KW-0256">Endoplasmic reticulum</keyword>
<keyword id="KW-0325">Glycoprotein</keyword>
<keyword id="KW-0328">Glycosyltransferase</keyword>
<keyword id="KW-0472">Membrane</keyword>
<keyword id="KW-1185">Reference proteome</keyword>
<keyword id="KW-0735">Signal-anchor</keyword>
<keyword id="KW-0808">Transferase</keyword>
<keyword id="KW-0812">Transmembrane</keyword>
<keyword id="KW-1133">Transmembrane helix</keyword>
<comment type="function">
    <text evidence="2 3">Protein O-fucosyltransferase that specifically catalyzes O-fucosylation of serine or threonine residues in EMI domains of target proteins, such as MMRN1, MMRN2 and EMID1. Attaches fucose through an O-glycosidic linkage. O-fucosylation of EMI domain-containing proteins may be required for facilitating protein folding and secretion. May also show alpha-(1,3)-fucosyltransferase activity toward the innermost N-acetyl glucosamine (GlcNAc) residue in biantennary N-glycan acceptors. However, this was tested with a library of synthetic substrates and this activity is unsure in vivo (By similarity). May be involved in biosynthesis of Lewis X-carrying biantennary N-glycans that regulate neuron stem cell self-renewal during brain development (By similarity).</text>
</comment>
<comment type="catalytic activity">
    <reaction evidence="3">
        <text>L-threonyl-[protein] + GDP-beta-L-fucose = 3-O-(alpha-L-fucosyl)-L-threonyl-[protein] + GDP + H(+)</text>
        <dbReference type="Rhea" id="RHEA:70491"/>
        <dbReference type="Rhea" id="RHEA-COMP:11060"/>
        <dbReference type="Rhea" id="RHEA-COMP:17915"/>
        <dbReference type="ChEBI" id="CHEBI:15378"/>
        <dbReference type="ChEBI" id="CHEBI:30013"/>
        <dbReference type="ChEBI" id="CHEBI:57273"/>
        <dbReference type="ChEBI" id="CHEBI:58189"/>
        <dbReference type="ChEBI" id="CHEBI:189631"/>
        <dbReference type="EC" id="2.4.1.221"/>
    </reaction>
    <physiologicalReaction direction="left-to-right" evidence="3">
        <dbReference type="Rhea" id="RHEA:70492"/>
    </physiologicalReaction>
</comment>
<comment type="catalytic activity">
    <reaction evidence="3">
        <text>L-seryl-[protein] + GDP-beta-L-fucose = 3-O-(alpha-L-fucosyl)-L-seryl-[protein] + GDP + H(+)</text>
        <dbReference type="Rhea" id="RHEA:63644"/>
        <dbReference type="Rhea" id="RHEA-COMP:9863"/>
        <dbReference type="Rhea" id="RHEA-COMP:17914"/>
        <dbReference type="ChEBI" id="CHEBI:15378"/>
        <dbReference type="ChEBI" id="CHEBI:29999"/>
        <dbReference type="ChEBI" id="CHEBI:57273"/>
        <dbReference type="ChEBI" id="CHEBI:58189"/>
        <dbReference type="ChEBI" id="CHEBI:189632"/>
        <dbReference type="EC" id="2.4.1.221"/>
    </reaction>
    <physiologicalReaction direction="left-to-right" evidence="3">
        <dbReference type="Rhea" id="RHEA:63645"/>
    </physiologicalReaction>
</comment>
<comment type="pathway">
    <text evidence="3">Protein modification; protein glycosylation.</text>
</comment>
<comment type="subcellular location">
    <subcellularLocation>
        <location evidence="3">Endoplasmic reticulum membrane</location>
        <topology evidence="4">Single-pass type II membrane protein</topology>
    </subcellularLocation>
</comment>
<comment type="similarity">
    <text evidence="5">Belongs to the glycosyltransferase 10 family.</text>
</comment>
<reference key="1">
    <citation type="submission" date="2005-02" db="EMBL/GenBank/DDBJ databases">
        <title>Phylogeny of fucosyltransferases.</title>
        <authorList>
            <person name="Martinez-Duncker I."/>
            <person name="Oriol R."/>
            <person name="Mollicone R."/>
        </authorList>
    </citation>
    <scope>NUCLEOTIDE SEQUENCE [MRNA]</scope>
</reference>
<gene>
    <name type="primary">FUT10</name>
    <name evidence="3" type="synonym">POFUT3</name>
</gene>
<evidence type="ECO:0000250" key="1">
    <source>
        <dbReference type="UniProtKB" id="Q11130"/>
    </source>
</evidence>
<evidence type="ECO:0000250" key="2">
    <source>
        <dbReference type="UniProtKB" id="Q5F2L2"/>
    </source>
</evidence>
<evidence type="ECO:0000250" key="3">
    <source>
        <dbReference type="UniProtKB" id="Q6P4F1"/>
    </source>
</evidence>
<evidence type="ECO:0000255" key="4"/>
<evidence type="ECO:0000305" key="5"/>
<dbReference type="EC" id="2.4.1.221" evidence="3"/>
<dbReference type="EC" id="2.4.1.-" evidence="2 3"/>
<dbReference type="EMBL" id="AJ879585">
    <property type="protein sequence ID" value="CAI52075.1"/>
    <property type="molecule type" value="mRNA"/>
</dbReference>
<dbReference type="RefSeq" id="NP_001012665.1">
    <property type="nucleotide sequence ID" value="NM_001012647.1"/>
</dbReference>
<dbReference type="SMR" id="Q5F2N4"/>
<dbReference type="FunCoup" id="Q5F2N4">
    <property type="interactions" value="15"/>
</dbReference>
<dbReference type="STRING" id="9615.ENSCAFP00000009503"/>
<dbReference type="CAZy" id="GT10">
    <property type="family name" value="Glycosyltransferase Family 10"/>
</dbReference>
<dbReference type="GlyCosmos" id="Q5F2N4">
    <property type="glycosylation" value="2 sites, No reported glycans"/>
</dbReference>
<dbReference type="PaxDb" id="9612-ENSCAFP00000009503"/>
<dbReference type="GeneID" id="503548"/>
<dbReference type="KEGG" id="cfa:503548"/>
<dbReference type="CTD" id="84750"/>
<dbReference type="eggNOG" id="KOG2619">
    <property type="taxonomic scope" value="Eukaryota"/>
</dbReference>
<dbReference type="InParanoid" id="Q5F2N4"/>
<dbReference type="OrthoDB" id="9993460at2759"/>
<dbReference type="UniPathway" id="UPA00378"/>
<dbReference type="Proteomes" id="UP000002254">
    <property type="component" value="Unplaced"/>
</dbReference>
<dbReference type="Proteomes" id="UP000694429">
    <property type="component" value="Unplaced"/>
</dbReference>
<dbReference type="Proteomes" id="UP000694542">
    <property type="component" value="Unplaced"/>
</dbReference>
<dbReference type="Proteomes" id="UP000805418">
    <property type="component" value="Unplaced"/>
</dbReference>
<dbReference type="GO" id="GO:0005783">
    <property type="term" value="C:endoplasmic reticulum"/>
    <property type="evidence" value="ECO:0000250"/>
    <property type="project" value="UniProtKB"/>
</dbReference>
<dbReference type="GO" id="GO:0005789">
    <property type="term" value="C:endoplasmic reticulum membrane"/>
    <property type="evidence" value="ECO:0007669"/>
    <property type="project" value="UniProtKB-SubCell"/>
</dbReference>
<dbReference type="GO" id="GO:0000139">
    <property type="term" value="C:Golgi membrane"/>
    <property type="evidence" value="ECO:0007669"/>
    <property type="project" value="InterPro"/>
</dbReference>
<dbReference type="GO" id="GO:0046920">
    <property type="term" value="F:alpha-(1-&gt;3)-fucosyltransferase activity"/>
    <property type="evidence" value="ECO:0000318"/>
    <property type="project" value="GO_Central"/>
</dbReference>
<dbReference type="GO" id="GO:0008417">
    <property type="term" value="F:fucosyltransferase activity"/>
    <property type="evidence" value="ECO:0000250"/>
    <property type="project" value="UniProtKB"/>
</dbReference>
<dbReference type="GO" id="GO:0046922">
    <property type="term" value="F:peptide-O-fucosyltransferase activity"/>
    <property type="evidence" value="ECO:0000250"/>
    <property type="project" value="UniProtKB"/>
</dbReference>
<dbReference type="GO" id="GO:0036065">
    <property type="term" value="P:fucosylation"/>
    <property type="evidence" value="ECO:0000318"/>
    <property type="project" value="GO_Central"/>
</dbReference>
<dbReference type="GO" id="GO:0036071">
    <property type="term" value="P:N-glycan fucosylation"/>
    <property type="evidence" value="ECO:0000250"/>
    <property type="project" value="UniProtKB"/>
</dbReference>
<dbReference type="GO" id="GO:0036445">
    <property type="term" value="P:neuronal stem cell division"/>
    <property type="evidence" value="ECO:0000250"/>
    <property type="project" value="UniProtKB"/>
</dbReference>
<dbReference type="GO" id="GO:0050714">
    <property type="term" value="P:positive regulation of protein secretion"/>
    <property type="evidence" value="ECO:0000250"/>
    <property type="project" value="UniProtKB"/>
</dbReference>
<dbReference type="FunFam" id="3.40.50.11660:FF:000002">
    <property type="entry name" value="Alpha-(1,3)-fucosyltransferase"/>
    <property type="match status" value="1"/>
</dbReference>
<dbReference type="Gene3D" id="3.40.50.11660">
    <property type="entry name" value="Glycosyl transferase family 10, C-terminal domain"/>
    <property type="match status" value="1"/>
</dbReference>
<dbReference type="InterPro" id="IPR017176">
    <property type="entry name" value="Alpha-1_3-FUT_met"/>
</dbReference>
<dbReference type="InterPro" id="IPR055270">
    <property type="entry name" value="Glyco_tran_10_C"/>
</dbReference>
<dbReference type="InterPro" id="IPR031481">
    <property type="entry name" value="Glyco_tran_10_N"/>
</dbReference>
<dbReference type="InterPro" id="IPR001503">
    <property type="entry name" value="Glyco_trans_10"/>
</dbReference>
<dbReference type="InterPro" id="IPR038577">
    <property type="entry name" value="GT10-like_C_sf"/>
</dbReference>
<dbReference type="PANTHER" id="PTHR11929">
    <property type="entry name" value="ALPHA- 1,3 -FUCOSYLTRANSFERASE"/>
    <property type="match status" value="1"/>
</dbReference>
<dbReference type="PANTHER" id="PTHR11929:SF194">
    <property type="entry name" value="ALPHA-(1,3)-FUCOSYLTRANSFERASE 10"/>
    <property type="match status" value="1"/>
</dbReference>
<dbReference type="Pfam" id="PF17039">
    <property type="entry name" value="Glyco_tran_10_N"/>
    <property type="match status" value="1"/>
</dbReference>
<dbReference type="Pfam" id="PF00852">
    <property type="entry name" value="Glyco_transf_10"/>
    <property type="match status" value="1"/>
</dbReference>
<dbReference type="PIRSF" id="PIRSF037332">
    <property type="entry name" value="Alpha1_3FUT_met"/>
    <property type="match status" value="1"/>
</dbReference>
<dbReference type="SUPFAM" id="SSF53756">
    <property type="entry name" value="UDP-Glycosyltransferase/glycogen phosphorylase"/>
    <property type="match status" value="1"/>
</dbReference>
<sequence>MVWIQRRRLLASCLCITATVFLLVTLQVVVELGKFERKKFKNSDLRAGHAKMEEEPVHLYPLPGKEALILKRKNQLETDSYPIMLWWSPLTGETGRLGQCGADECFFTINRTYLHHPMTKAFLFYGTDFNIDSLPLPRKAHHDWALFHEESPKNNYKLFHKPVITLFNYTATFSRHSHLPLTTQYLEGVEVLKSLRYLVPLRSKNNLRRRLAPLVYIQSDCDPPSDRDSYVRELMTYIEVDSYGECLRNKDLPQQLKNPASMDADGFYRIIAQYKFILAFENAVCDDYITEKFWRPLKLGVVPVYYGSPSIADWLPSNRSAILVSEFAHPRELANYIRQLDHDDRMYEAYIEWKLKGEVSNQRLLTALRERKWGVQDVHQDNYIDAFECMVCTKVWDNIRLQEKGLPPKRWKADVSHLSCPEPAVFAFSPLAPRWSSLREMWIPSFEQSKKEAQALRWLVDRNKNFSAQEFWALVFKD</sequence>
<protein>
    <recommendedName>
        <fullName>GDP-fucose protein O-fucosyltransferase 3</fullName>
        <ecNumber evidence="3">2.4.1.221</ecNumber>
    </recommendedName>
    <alternativeName>
        <fullName>Alpha-(1,3)-fucosyltransferase 10</fullName>
        <ecNumber evidence="2 3">2.4.1.-</ecNumber>
    </alternativeName>
    <alternativeName>
        <fullName>Fucosyltransferase X</fullName>
        <shortName>Fuc-TX</shortName>
        <shortName>FucT-X</shortName>
    </alternativeName>
    <alternativeName>
        <fullName>Galactoside 3-L-fucosyltransferase 10</fullName>
        <shortName>Fucosyltransferase 10</shortName>
    </alternativeName>
</protein>
<name>OFUT3_CANLF</name>